<gene>
    <name evidence="1" type="primary">cysS</name>
    <name type="ordered locus">SGR_4019</name>
</gene>
<organism>
    <name type="scientific">Streptomyces griseus subsp. griseus (strain JCM 4626 / CBS 651.72 / NBRC 13350 / KCC S-0626 / ISP 5235)</name>
    <dbReference type="NCBI Taxonomy" id="455632"/>
    <lineage>
        <taxon>Bacteria</taxon>
        <taxon>Bacillati</taxon>
        <taxon>Actinomycetota</taxon>
        <taxon>Actinomycetes</taxon>
        <taxon>Kitasatosporales</taxon>
        <taxon>Streptomycetaceae</taxon>
        <taxon>Streptomyces</taxon>
    </lineage>
</organism>
<name>SYC_STRGG</name>
<proteinExistence type="inferred from homology"/>
<reference key="1">
    <citation type="journal article" date="2008" name="J. Bacteriol.">
        <title>Genome sequence of the streptomycin-producing microorganism Streptomyces griseus IFO 13350.</title>
        <authorList>
            <person name="Ohnishi Y."/>
            <person name="Ishikawa J."/>
            <person name="Hara H."/>
            <person name="Suzuki H."/>
            <person name="Ikenoya M."/>
            <person name="Ikeda H."/>
            <person name="Yamashita A."/>
            <person name="Hattori M."/>
            <person name="Horinouchi S."/>
        </authorList>
    </citation>
    <scope>NUCLEOTIDE SEQUENCE [LARGE SCALE GENOMIC DNA]</scope>
    <source>
        <strain>JCM 4626 / CBS 651.72 / NBRC 13350 / KCC S-0626 / ISP 5235</strain>
    </source>
</reference>
<accession>B1VS94</accession>
<evidence type="ECO:0000255" key="1">
    <source>
        <dbReference type="HAMAP-Rule" id="MF_00041"/>
    </source>
</evidence>
<dbReference type="EC" id="6.1.1.16" evidence="1"/>
<dbReference type="EMBL" id="AP009493">
    <property type="protein sequence ID" value="BAG20848.1"/>
    <property type="molecule type" value="Genomic_DNA"/>
</dbReference>
<dbReference type="RefSeq" id="WP_012380310.1">
    <property type="nucleotide sequence ID" value="NC_010572.1"/>
</dbReference>
<dbReference type="SMR" id="B1VS94"/>
<dbReference type="KEGG" id="sgr:SGR_4019"/>
<dbReference type="PATRIC" id="fig|455632.4.peg.4091"/>
<dbReference type="eggNOG" id="COG0215">
    <property type="taxonomic scope" value="Bacteria"/>
</dbReference>
<dbReference type="HOGENOM" id="CLU_013528_0_1_11"/>
<dbReference type="Proteomes" id="UP000001685">
    <property type="component" value="Chromosome"/>
</dbReference>
<dbReference type="GO" id="GO:0005829">
    <property type="term" value="C:cytosol"/>
    <property type="evidence" value="ECO:0007669"/>
    <property type="project" value="TreeGrafter"/>
</dbReference>
<dbReference type="GO" id="GO:0005524">
    <property type="term" value="F:ATP binding"/>
    <property type="evidence" value="ECO:0007669"/>
    <property type="project" value="UniProtKB-UniRule"/>
</dbReference>
<dbReference type="GO" id="GO:0004817">
    <property type="term" value="F:cysteine-tRNA ligase activity"/>
    <property type="evidence" value="ECO:0007669"/>
    <property type="project" value="UniProtKB-UniRule"/>
</dbReference>
<dbReference type="GO" id="GO:0008270">
    <property type="term" value="F:zinc ion binding"/>
    <property type="evidence" value="ECO:0007669"/>
    <property type="project" value="UniProtKB-UniRule"/>
</dbReference>
<dbReference type="GO" id="GO:0006423">
    <property type="term" value="P:cysteinyl-tRNA aminoacylation"/>
    <property type="evidence" value="ECO:0007669"/>
    <property type="project" value="UniProtKB-UniRule"/>
</dbReference>
<dbReference type="CDD" id="cd00672">
    <property type="entry name" value="CysRS_core"/>
    <property type="match status" value="1"/>
</dbReference>
<dbReference type="FunFam" id="3.40.50.620:FF:000068">
    <property type="entry name" value="Cysteine--tRNA ligase"/>
    <property type="match status" value="1"/>
</dbReference>
<dbReference type="Gene3D" id="1.20.120.1910">
    <property type="entry name" value="Cysteine-tRNA ligase, C-terminal anti-codon recognition domain"/>
    <property type="match status" value="1"/>
</dbReference>
<dbReference type="Gene3D" id="3.40.50.620">
    <property type="entry name" value="HUPs"/>
    <property type="match status" value="1"/>
</dbReference>
<dbReference type="HAMAP" id="MF_00041">
    <property type="entry name" value="Cys_tRNA_synth"/>
    <property type="match status" value="1"/>
</dbReference>
<dbReference type="InterPro" id="IPR015803">
    <property type="entry name" value="Cys-tRNA-ligase"/>
</dbReference>
<dbReference type="InterPro" id="IPR015273">
    <property type="entry name" value="Cys-tRNA-synt_Ia_DALR"/>
</dbReference>
<dbReference type="InterPro" id="IPR024909">
    <property type="entry name" value="Cys-tRNA/MSH_ligase"/>
</dbReference>
<dbReference type="InterPro" id="IPR056411">
    <property type="entry name" value="CysS_C"/>
</dbReference>
<dbReference type="InterPro" id="IPR014729">
    <property type="entry name" value="Rossmann-like_a/b/a_fold"/>
</dbReference>
<dbReference type="InterPro" id="IPR032678">
    <property type="entry name" value="tRNA-synt_1_cat_dom"/>
</dbReference>
<dbReference type="InterPro" id="IPR009080">
    <property type="entry name" value="tRNAsynth_Ia_anticodon-bd"/>
</dbReference>
<dbReference type="NCBIfam" id="TIGR00435">
    <property type="entry name" value="cysS"/>
    <property type="match status" value="1"/>
</dbReference>
<dbReference type="PANTHER" id="PTHR10890:SF30">
    <property type="entry name" value="CYSTEINE--TRNA LIGASE"/>
    <property type="match status" value="1"/>
</dbReference>
<dbReference type="PANTHER" id="PTHR10890">
    <property type="entry name" value="CYSTEINYL-TRNA SYNTHETASE"/>
    <property type="match status" value="1"/>
</dbReference>
<dbReference type="Pfam" id="PF23493">
    <property type="entry name" value="CysS_C"/>
    <property type="match status" value="1"/>
</dbReference>
<dbReference type="Pfam" id="PF09190">
    <property type="entry name" value="DALR_2"/>
    <property type="match status" value="1"/>
</dbReference>
<dbReference type="Pfam" id="PF01406">
    <property type="entry name" value="tRNA-synt_1e"/>
    <property type="match status" value="1"/>
</dbReference>
<dbReference type="PRINTS" id="PR00983">
    <property type="entry name" value="TRNASYNTHCYS"/>
</dbReference>
<dbReference type="SMART" id="SM00840">
    <property type="entry name" value="DALR_2"/>
    <property type="match status" value="1"/>
</dbReference>
<dbReference type="SUPFAM" id="SSF47323">
    <property type="entry name" value="Anticodon-binding domain of a subclass of class I aminoacyl-tRNA synthetases"/>
    <property type="match status" value="1"/>
</dbReference>
<dbReference type="SUPFAM" id="SSF52374">
    <property type="entry name" value="Nucleotidylyl transferase"/>
    <property type="match status" value="1"/>
</dbReference>
<feature type="chain" id="PRO_1000090876" description="Cysteine--tRNA ligase">
    <location>
        <begin position="1"/>
        <end position="466"/>
    </location>
</feature>
<feature type="short sequence motif" description="'HIGH' region">
    <location>
        <begin position="31"/>
        <end position="41"/>
    </location>
</feature>
<feature type="short sequence motif" description="'KMSKS' region">
    <location>
        <begin position="264"/>
        <end position="268"/>
    </location>
</feature>
<feature type="binding site" evidence="1">
    <location>
        <position position="29"/>
    </location>
    <ligand>
        <name>Zn(2+)</name>
        <dbReference type="ChEBI" id="CHEBI:29105"/>
    </ligand>
</feature>
<feature type="binding site" evidence="1">
    <location>
        <position position="208"/>
    </location>
    <ligand>
        <name>Zn(2+)</name>
        <dbReference type="ChEBI" id="CHEBI:29105"/>
    </ligand>
</feature>
<feature type="binding site" evidence="1">
    <location>
        <position position="233"/>
    </location>
    <ligand>
        <name>Zn(2+)</name>
        <dbReference type="ChEBI" id="CHEBI:29105"/>
    </ligand>
</feature>
<feature type="binding site" evidence="1">
    <location>
        <position position="237"/>
    </location>
    <ligand>
        <name>Zn(2+)</name>
        <dbReference type="ChEBI" id="CHEBI:29105"/>
    </ligand>
</feature>
<feature type="binding site" evidence="1">
    <location>
        <position position="267"/>
    </location>
    <ligand>
        <name>ATP</name>
        <dbReference type="ChEBI" id="CHEBI:30616"/>
    </ligand>
</feature>
<keyword id="KW-0030">Aminoacyl-tRNA synthetase</keyword>
<keyword id="KW-0067">ATP-binding</keyword>
<keyword id="KW-0963">Cytoplasm</keyword>
<keyword id="KW-0436">Ligase</keyword>
<keyword id="KW-0479">Metal-binding</keyword>
<keyword id="KW-0547">Nucleotide-binding</keyword>
<keyword id="KW-0648">Protein biosynthesis</keyword>
<keyword id="KW-0862">Zinc</keyword>
<sequence>MTIRLHDTNARQIRDFVPLTAGCVSIYLCGATVQAAPHIGHIRSGLNFDIMRRWFAYRGYDVTFIRNVTDIDDKIIAKSAEQGRPWWSIGYENERAFNDGYDALGCLPPTYEPRATGHIPEMIEMMRGLIERGHAYEADGNVYFDVRSLPGYLTLSNQELDDLRQPSGEGETGKRDQRDFAMWKATKPGEPSWETPWGRGRPGWHLECSAMAHKYLGSAFDIHGGGIDLIFPHHENEIAQATAYGDEFAKYWVHNGWVTMSGEKMSKSLGNSVLVSEMVKHWRPIVLRYYLGTPHYRSMIEYSEEALREAESAFARIEGFVQRVTEKTGEVVPPADEVPPAFAEAMDEDLGVPQALAIIHTTVRQGNSALAADDKEAAADRLAEVRAMLGVLGLDPLDPHWAGEGDRGEDLHGVVDTLVRLVLDQRQSARARKDWAAADAIRDQLNQSGLVIEDSPAGPRWTLGPR</sequence>
<protein>
    <recommendedName>
        <fullName evidence="1">Cysteine--tRNA ligase</fullName>
        <ecNumber evidence="1">6.1.1.16</ecNumber>
    </recommendedName>
    <alternativeName>
        <fullName evidence="1">Cysteinyl-tRNA synthetase</fullName>
        <shortName evidence="1">CysRS</shortName>
    </alternativeName>
</protein>
<comment type="catalytic activity">
    <reaction evidence="1">
        <text>tRNA(Cys) + L-cysteine + ATP = L-cysteinyl-tRNA(Cys) + AMP + diphosphate</text>
        <dbReference type="Rhea" id="RHEA:17773"/>
        <dbReference type="Rhea" id="RHEA-COMP:9661"/>
        <dbReference type="Rhea" id="RHEA-COMP:9679"/>
        <dbReference type="ChEBI" id="CHEBI:30616"/>
        <dbReference type="ChEBI" id="CHEBI:33019"/>
        <dbReference type="ChEBI" id="CHEBI:35235"/>
        <dbReference type="ChEBI" id="CHEBI:78442"/>
        <dbReference type="ChEBI" id="CHEBI:78517"/>
        <dbReference type="ChEBI" id="CHEBI:456215"/>
        <dbReference type="EC" id="6.1.1.16"/>
    </reaction>
</comment>
<comment type="cofactor">
    <cofactor evidence="1">
        <name>Zn(2+)</name>
        <dbReference type="ChEBI" id="CHEBI:29105"/>
    </cofactor>
    <text evidence="1">Binds 1 zinc ion per subunit.</text>
</comment>
<comment type="subunit">
    <text evidence="1">Monomer.</text>
</comment>
<comment type="subcellular location">
    <subcellularLocation>
        <location evidence="1">Cytoplasm</location>
    </subcellularLocation>
</comment>
<comment type="similarity">
    <text evidence="1">Belongs to the class-I aminoacyl-tRNA synthetase family.</text>
</comment>